<name>DAPF_RICFE</name>
<protein>
    <recommendedName>
        <fullName evidence="1">Diaminopimelate epimerase</fullName>
        <shortName evidence="1">DAP epimerase</shortName>
        <ecNumber evidence="1">5.1.1.7</ecNumber>
    </recommendedName>
    <alternativeName>
        <fullName evidence="1">PLP-independent amino acid racemase</fullName>
    </alternativeName>
</protein>
<gene>
    <name evidence="1" type="primary">dapF</name>
    <name type="ordered locus">RF_0645</name>
</gene>
<feature type="chain" id="PRO_0000278045" description="Diaminopimelate epimerase">
    <location>
        <begin position="1"/>
        <end position="270"/>
    </location>
</feature>
<feature type="active site" description="Proton donor" evidence="1">
    <location>
        <position position="75"/>
    </location>
</feature>
<feature type="active site" description="Proton acceptor" evidence="1">
    <location>
        <position position="213"/>
    </location>
</feature>
<feature type="binding site" evidence="1">
    <location>
        <position position="15"/>
    </location>
    <ligand>
        <name>substrate</name>
    </ligand>
</feature>
<feature type="binding site" evidence="1">
    <location>
        <position position="49"/>
    </location>
    <ligand>
        <name>substrate</name>
    </ligand>
</feature>
<feature type="binding site" evidence="1">
    <location>
        <position position="66"/>
    </location>
    <ligand>
        <name>substrate</name>
    </ligand>
</feature>
<feature type="binding site" evidence="1">
    <location>
        <begin position="76"/>
        <end position="77"/>
    </location>
    <ligand>
        <name>substrate</name>
    </ligand>
</feature>
<feature type="binding site" evidence="1">
    <location>
        <position position="155"/>
    </location>
    <ligand>
        <name>substrate</name>
    </ligand>
</feature>
<feature type="binding site" evidence="1">
    <location>
        <position position="187"/>
    </location>
    <ligand>
        <name>substrate</name>
    </ligand>
</feature>
<feature type="binding site" evidence="1">
    <location>
        <begin position="204"/>
        <end position="205"/>
    </location>
    <ligand>
        <name>substrate</name>
    </ligand>
</feature>
<feature type="binding site" evidence="1">
    <location>
        <begin position="214"/>
        <end position="215"/>
    </location>
    <ligand>
        <name>substrate</name>
    </ligand>
</feature>
<feature type="site" description="Could be important to modulate the pK values of the two catalytic cysteine residues" evidence="1">
    <location>
        <position position="157"/>
    </location>
</feature>
<feature type="site" description="Could be important to modulate the pK values of the two catalytic cysteine residues" evidence="1">
    <location>
        <position position="204"/>
    </location>
</feature>
<organism>
    <name type="scientific">Rickettsia felis (strain ATCC VR-1525 / URRWXCal2)</name>
    <name type="common">Rickettsia azadi</name>
    <dbReference type="NCBI Taxonomy" id="315456"/>
    <lineage>
        <taxon>Bacteria</taxon>
        <taxon>Pseudomonadati</taxon>
        <taxon>Pseudomonadota</taxon>
        <taxon>Alphaproteobacteria</taxon>
        <taxon>Rickettsiales</taxon>
        <taxon>Rickettsiaceae</taxon>
        <taxon>Rickettsieae</taxon>
        <taxon>Rickettsia</taxon>
        <taxon>spotted fever group</taxon>
    </lineage>
</organism>
<comment type="function">
    <text evidence="1">Catalyzes the stereoinversion of LL-2,6-diaminopimelate (L,L-DAP) to meso-diaminopimelate (meso-DAP), a precursor of L-lysine and an essential component of the bacterial peptidoglycan.</text>
</comment>
<comment type="catalytic activity">
    <reaction evidence="1">
        <text>(2S,6S)-2,6-diaminopimelate = meso-2,6-diaminopimelate</text>
        <dbReference type="Rhea" id="RHEA:15393"/>
        <dbReference type="ChEBI" id="CHEBI:57609"/>
        <dbReference type="ChEBI" id="CHEBI:57791"/>
        <dbReference type="EC" id="5.1.1.7"/>
    </reaction>
</comment>
<comment type="pathway">
    <text evidence="1">Amino-acid biosynthesis; L-lysine biosynthesis via DAP pathway; DL-2,6-diaminopimelate from LL-2,6-diaminopimelate: step 1/1.</text>
</comment>
<comment type="subunit">
    <text evidence="1">Homodimer.</text>
</comment>
<comment type="subcellular location">
    <subcellularLocation>
        <location evidence="1">Cytoplasm</location>
    </subcellularLocation>
</comment>
<comment type="similarity">
    <text evidence="1">Belongs to the diaminopimelate epimerase family.</text>
</comment>
<dbReference type="EC" id="5.1.1.7" evidence="1"/>
<dbReference type="EMBL" id="CP000053">
    <property type="protein sequence ID" value="AAY61496.1"/>
    <property type="molecule type" value="Genomic_DNA"/>
</dbReference>
<dbReference type="SMR" id="Q4ULS7"/>
<dbReference type="STRING" id="315456.RF_0645"/>
<dbReference type="KEGG" id="rfe:RF_0645"/>
<dbReference type="eggNOG" id="COG0253">
    <property type="taxonomic scope" value="Bacteria"/>
</dbReference>
<dbReference type="HOGENOM" id="CLU_053306_1_0_5"/>
<dbReference type="OrthoDB" id="9805408at2"/>
<dbReference type="UniPathway" id="UPA00034">
    <property type="reaction ID" value="UER00025"/>
</dbReference>
<dbReference type="Proteomes" id="UP000008548">
    <property type="component" value="Chromosome"/>
</dbReference>
<dbReference type="GO" id="GO:0005829">
    <property type="term" value="C:cytosol"/>
    <property type="evidence" value="ECO:0007669"/>
    <property type="project" value="TreeGrafter"/>
</dbReference>
<dbReference type="GO" id="GO:0008837">
    <property type="term" value="F:diaminopimelate epimerase activity"/>
    <property type="evidence" value="ECO:0007669"/>
    <property type="project" value="UniProtKB-UniRule"/>
</dbReference>
<dbReference type="GO" id="GO:0009089">
    <property type="term" value="P:lysine biosynthetic process via diaminopimelate"/>
    <property type="evidence" value="ECO:0007669"/>
    <property type="project" value="UniProtKB-UniRule"/>
</dbReference>
<dbReference type="Gene3D" id="3.10.310.10">
    <property type="entry name" value="Diaminopimelate Epimerase, Chain A, domain 1"/>
    <property type="match status" value="2"/>
</dbReference>
<dbReference type="HAMAP" id="MF_00197">
    <property type="entry name" value="DAP_epimerase"/>
    <property type="match status" value="1"/>
</dbReference>
<dbReference type="InterPro" id="IPR018510">
    <property type="entry name" value="DAP_epimerase_AS"/>
</dbReference>
<dbReference type="InterPro" id="IPR001653">
    <property type="entry name" value="DAP_epimerase_DapF"/>
</dbReference>
<dbReference type="NCBIfam" id="TIGR00652">
    <property type="entry name" value="DapF"/>
    <property type="match status" value="1"/>
</dbReference>
<dbReference type="PANTHER" id="PTHR31689:SF0">
    <property type="entry name" value="DIAMINOPIMELATE EPIMERASE"/>
    <property type="match status" value="1"/>
</dbReference>
<dbReference type="PANTHER" id="PTHR31689">
    <property type="entry name" value="DIAMINOPIMELATE EPIMERASE, CHLOROPLASTIC"/>
    <property type="match status" value="1"/>
</dbReference>
<dbReference type="Pfam" id="PF01678">
    <property type="entry name" value="DAP_epimerase"/>
    <property type="match status" value="2"/>
</dbReference>
<dbReference type="SUPFAM" id="SSF54506">
    <property type="entry name" value="Diaminopimelate epimerase-like"/>
    <property type="match status" value="2"/>
</dbReference>
<dbReference type="PROSITE" id="PS01326">
    <property type="entry name" value="DAP_EPIMERASE"/>
    <property type="match status" value="1"/>
</dbReference>
<accession>Q4ULS7</accession>
<proteinExistence type="inferred from homology"/>
<reference key="1">
    <citation type="journal article" date="2005" name="PLoS Biol.">
        <title>The genome sequence of Rickettsia felis identifies the first putative conjugative plasmid in an obligate intracellular parasite.</title>
        <authorList>
            <person name="Ogata H."/>
            <person name="Renesto P."/>
            <person name="Audic S."/>
            <person name="Robert C."/>
            <person name="Blanc G."/>
            <person name="Fournier P.-E."/>
            <person name="Parinello H."/>
            <person name="Claverie J.-M."/>
            <person name="Raoult D."/>
        </authorList>
    </citation>
    <scope>NUCLEOTIDE SEQUENCE [LARGE SCALE GENOMIC DNA]</scope>
    <source>
        <strain>ATCC VR-1525 / URRWXCal2</strain>
    </source>
</reference>
<keyword id="KW-0028">Amino-acid biosynthesis</keyword>
<keyword id="KW-0963">Cytoplasm</keyword>
<keyword id="KW-0413">Isomerase</keyword>
<keyword id="KW-0457">Lysine biosynthesis</keyword>
<sequence length="270" mass="30023">MISKINFVKMHGLGNDFVVVNKRDLSSSYDLSQLAKNMADRHTGIGCDQFIIYEEHDDFYEMIIYNIDGSSAKLCGNATRCLAKLIYLDTGKKDITVMVGNKKLLCNVEDENNISVNVGKVSFNEVWMPSRDKIWELAERYMIDLKETICVDIGNPHLVIFSKLEPQDQKIVGEKLQAKELFADGVNVNFAEVKDNKIYLSVWERGAGLTLACGSGACGSFAAGLKLGFIHSPSTVVFKYGSLTMKEENGNIIMQGAATLVARGEYYCEQ</sequence>
<evidence type="ECO:0000255" key="1">
    <source>
        <dbReference type="HAMAP-Rule" id="MF_00197"/>
    </source>
</evidence>